<evidence type="ECO:0000255" key="1">
    <source>
        <dbReference type="HAMAP-Rule" id="MF_00528"/>
    </source>
</evidence>
<sequence length="207" mass="22747">MITPAGNCIYLASRSARRRDLLKQIGIRHNILLMREALSRPADVDETPLPEESPADYVYRITHTKSEAGWLRLKQRGLPLLPVLAADTTVVLDGRILGKPQDIGHAEEMLHALSGQEHQVYTAVGLTFQGQTRLRLSTTTVRFRDISPREIQAYIASGEPHDKAGAYAIQGKAAAFIINIDGSYSGVVGLPLFETSQLLEETGISVF</sequence>
<protein>
    <recommendedName>
        <fullName evidence="1">dTTP/UTP pyrophosphatase</fullName>
        <shortName evidence="1">dTTPase/UTPase</shortName>
        <ecNumber evidence="1">3.6.1.9</ecNumber>
    </recommendedName>
    <alternativeName>
        <fullName evidence="1">Nucleoside triphosphate pyrophosphatase</fullName>
    </alternativeName>
    <alternativeName>
        <fullName evidence="1">Nucleotide pyrophosphatase</fullName>
        <shortName evidence="1">Nucleotide PPase</shortName>
    </alternativeName>
</protein>
<gene>
    <name type="ordered locus">NE0356</name>
</gene>
<name>NTPPA_NITEU</name>
<dbReference type="EC" id="3.6.1.9" evidence="1"/>
<dbReference type="EMBL" id="AL954747">
    <property type="protein sequence ID" value="CAD84267.1"/>
    <property type="molecule type" value="Genomic_DNA"/>
</dbReference>
<dbReference type="RefSeq" id="WP_011110991.1">
    <property type="nucleotide sequence ID" value="NC_004757.1"/>
</dbReference>
<dbReference type="SMR" id="Q82XC7"/>
<dbReference type="STRING" id="228410.NE0356"/>
<dbReference type="GeneID" id="87103562"/>
<dbReference type="KEGG" id="neu:NE0356"/>
<dbReference type="eggNOG" id="COG0424">
    <property type="taxonomic scope" value="Bacteria"/>
</dbReference>
<dbReference type="HOGENOM" id="CLU_040416_2_1_4"/>
<dbReference type="OrthoDB" id="9807767at2"/>
<dbReference type="PhylomeDB" id="Q82XC7"/>
<dbReference type="Proteomes" id="UP000001416">
    <property type="component" value="Chromosome"/>
</dbReference>
<dbReference type="GO" id="GO:0005737">
    <property type="term" value="C:cytoplasm"/>
    <property type="evidence" value="ECO:0007669"/>
    <property type="project" value="UniProtKB-SubCell"/>
</dbReference>
<dbReference type="GO" id="GO:0036218">
    <property type="term" value="F:dTTP diphosphatase activity"/>
    <property type="evidence" value="ECO:0007669"/>
    <property type="project" value="RHEA"/>
</dbReference>
<dbReference type="GO" id="GO:0036221">
    <property type="term" value="F:UTP diphosphatase activity"/>
    <property type="evidence" value="ECO:0007669"/>
    <property type="project" value="RHEA"/>
</dbReference>
<dbReference type="GO" id="GO:0009117">
    <property type="term" value="P:nucleotide metabolic process"/>
    <property type="evidence" value="ECO:0007669"/>
    <property type="project" value="UniProtKB-KW"/>
</dbReference>
<dbReference type="CDD" id="cd00555">
    <property type="entry name" value="Maf"/>
    <property type="match status" value="1"/>
</dbReference>
<dbReference type="Gene3D" id="3.90.950.10">
    <property type="match status" value="1"/>
</dbReference>
<dbReference type="HAMAP" id="MF_00528">
    <property type="entry name" value="Maf"/>
    <property type="match status" value="1"/>
</dbReference>
<dbReference type="InterPro" id="IPR029001">
    <property type="entry name" value="ITPase-like_fam"/>
</dbReference>
<dbReference type="InterPro" id="IPR003697">
    <property type="entry name" value="Maf-like"/>
</dbReference>
<dbReference type="NCBIfam" id="TIGR00172">
    <property type="entry name" value="maf"/>
    <property type="match status" value="1"/>
</dbReference>
<dbReference type="PANTHER" id="PTHR43213">
    <property type="entry name" value="BIFUNCTIONAL DTTP/UTP PYROPHOSPHATASE/METHYLTRANSFERASE PROTEIN-RELATED"/>
    <property type="match status" value="1"/>
</dbReference>
<dbReference type="PANTHER" id="PTHR43213:SF5">
    <property type="entry name" value="BIFUNCTIONAL DTTP_UTP PYROPHOSPHATASE_METHYLTRANSFERASE PROTEIN-RELATED"/>
    <property type="match status" value="1"/>
</dbReference>
<dbReference type="Pfam" id="PF02545">
    <property type="entry name" value="Maf"/>
    <property type="match status" value="1"/>
</dbReference>
<dbReference type="PIRSF" id="PIRSF006305">
    <property type="entry name" value="Maf"/>
    <property type="match status" value="1"/>
</dbReference>
<dbReference type="SUPFAM" id="SSF52972">
    <property type="entry name" value="ITPase-like"/>
    <property type="match status" value="1"/>
</dbReference>
<accession>Q82XC7</accession>
<reference key="1">
    <citation type="journal article" date="2003" name="J. Bacteriol.">
        <title>Complete genome sequence of the ammonia-oxidizing bacterium and obligate chemolithoautotroph Nitrosomonas europaea.</title>
        <authorList>
            <person name="Chain P."/>
            <person name="Lamerdin J.E."/>
            <person name="Larimer F.W."/>
            <person name="Regala W."/>
            <person name="Lao V."/>
            <person name="Land M.L."/>
            <person name="Hauser L."/>
            <person name="Hooper A.B."/>
            <person name="Klotz M.G."/>
            <person name="Norton J."/>
            <person name="Sayavedra-Soto L.A."/>
            <person name="Arciero D.M."/>
            <person name="Hommes N.G."/>
            <person name="Whittaker M.M."/>
            <person name="Arp D.J."/>
        </authorList>
    </citation>
    <scope>NUCLEOTIDE SEQUENCE [LARGE SCALE GENOMIC DNA]</scope>
    <source>
        <strain>ATCC 19718 / CIP 103999 / KCTC 2705 / NBRC 14298</strain>
    </source>
</reference>
<organism>
    <name type="scientific">Nitrosomonas europaea (strain ATCC 19718 / CIP 103999 / KCTC 2705 / NBRC 14298)</name>
    <dbReference type="NCBI Taxonomy" id="228410"/>
    <lineage>
        <taxon>Bacteria</taxon>
        <taxon>Pseudomonadati</taxon>
        <taxon>Pseudomonadota</taxon>
        <taxon>Betaproteobacteria</taxon>
        <taxon>Nitrosomonadales</taxon>
        <taxon>Nitrosomonadaceae</taxon>
        <taxon>Nitrosomonas</taxon>
    </lineage>
</organism>
<feature type="chain" id="PRO_0000123036" description="dTTP/UTP pyrophosphatase">
    <location>
        <begin position="1"/>
        <end position="207"/>
    </location>
</feature>
<feature type="active site" description="Proton acceptor" evidence="1">
    <location>
        <position position="87"/>
    </location>
</feature>
<feature type="site" description="Important for substrate specificity" evidence="1">
    <location>
        <position position="17"/>
    </location>
</feature>
<feature type="site" description="Important for substrate specificity" evidence="1">
    <location>
        <position position="88"/>
    </location>
</feature>
<feature type="site" description="Important for substrate specificity" evidence="1">
    <location>
        <position position="170"/>
    </location>
</feature>
<proteinExistence type="inferred from homology"/>
<keyword id="KW-0963">Cytoplasm</keyword>
<keyword id="KW-0378">Hydrolase</keyword>
<keyword id="KW-0546">Nucleotide metabolism</keyword>
<keyword id="KW-1185">Reference proteome</keyword>
<comment type="function">
    <text evidence="1">Nucleoside triphosphate pyrophosphatase that hydrolyzes dTTP and UTP. May have a dual role in cell division arrest and in preventing the incorporation of modified nucleotides into cellular nucleic acids.</text>
</comment>
<comment type="catalytic activity">
    <reaction evidence="1">
        <text>dTTP + H2O = dTMP + diphosphate + H(+)</text>
        <dbReference type="Rhea" id="RHEA:28534"/>
        <dbReference type="ChEBI" id="CHEBI:15377"/>
        <dbReference type="ChEBI" id="CHEBI:15378"/>
        <dbReference type="ChEBI" id="CHEBI:33019"/>
        <dbReference type="ChEBI" id="CHEBI:37568"/>
        <dbReference type="ChEBI" id="CHEBI:63528"/>
        <dbReference type="EC" id="3.6.1.9"/>
    </reaction>
</comment>
<comment type="catalytic activity">
    <reaction evidence="1">
        <text>UTP + H2O = UMP + diphosphate + H(+)</text>
        <dbReference type="Rhea" id="RHEA:29395"/>
        <dbReference type="ChEBI" id="CHEBI:15377"/>
        <dbReference type="ChEBI" id="CHEBI:15378"/>
        <dbReference type="ChEBI" id="CHEBI:33019"/>
        <dbReference type="ChEBI" id="CHEBI:46398"/>
        <dbReference type="ChEBI" id="CHEBI:57865"/>
        <dbReference type="EC" id="3.6.1.9"/>
    </reaction>
</comment>
<comment type="cofactor">
    <cofactor evidence="1">
        <name>a divalent metal cation</name>
        <dbReference type="ChEBI" id="CHEBI:60240"/>
    </cofactor>
</comment>
<comment type="subcellular location">
    <subcellularLocation>
        <location evidence="1">Cytoplasm</location>
    </subcellularLocation>
</comment>
<comment type="similarity">
    <text evidence="1">Belongs to the Maf family. YhdE subfamily.</text>
</comment>